<comment type="function">
    <text evidence="1">Produces ATP from ADP in the presence of a proton gradient across the membrane. The catalytic sites are hosted primarily by the beta subunits.</text>
</comment>
<comment type="catalytic activity">
    <reaction evidence="1">
        <text>ATP + H2O + 4 H(+)(in) = ADP + phosphate + 5 H(+)(out)</text>
        <dbReference type="Rhea" id="RHEA:57720"/>
        <dbReference type="ChEBI" id="CHEBI:15377"/>
        <dbReference type="ChEBI" id="CHEBI:15378"/>
        <dbReference type="ChEBI" id="CHEBI:30616"/>
        <dbReference type="ChEBI" id="CHEBI:43474"/>
        <dbReference type="ChEBI" id="CHEBI:456216"/>
        <dbReference type="EC" id="7.1.2.2"/>
    </reaction>
</comment>
<comment type="subunit">
    <text evidence="1">F-type ATPases have 2 components, CF(1) - the catalytic core - and CF(0) - the membrane proton channel. CF(1) has five subunits: alpha(3), beta(3), gamma(1), delta(1), epsilon(1). CF(0) has three main subunits: a(1), b(2) and c(9-12). The alpha and beta chains form an alternating ring which encloses part of the gamma chain. CF(1) is attached to CF(0) by a central stalk formed by the gamma and epsilon chains, while a peripheral stalk is formed by the delta and b chains.</text>
</comment>
<comment type="subcellular location">
    <subcellularLocation>
        <location evidence="1">Cell inner membrane</location>
        <topology evidence="1">Peripheral membrane protein</topology>
    </subcellularLocation>
</comment>
<comment type="similarity">
    <text evidence="1">Belongs to the ATPase alpha/beta chains family.</text>
</comment>
<gene>
    <name evidence="1" type="primary">atpD</name>
    <name type="ordered locus">Oant_1105</name>
</gene>
<keyword id="KW-0066">ATP synthesis</keyword>
<keyword id="KW-0067">ATP-binding</keyword>
<keyword id="KW-0997">Cell inner membrane</keyword>
<keyword id="KW-1003">Cell membrane</keyword>
<keyword id="KW-0139">CF(1)</keyword>
<keyword id="KW-0375">Hydrogen ion transport</keyword>
<keyword id="KW-0406">Ion transport</keyword>
<keyword id="KW-0472">Membrane</keyword>
<keyword id="KW-0547">Nucleotide-binding</keyword>
<keyword id="KW-1185">Reference proteome</keyword>
<keyword id="KW-1278">Translocase</keyword>
<keyword id="KW-0813">Transport</keyword>
<protein>
    <recommendedName>
        <fullName evidence="1">ATP synthase subunit beta</fullName>
        <ecNumber evidence="1">7.1.2.2</ecNumber>
    </recommendedName>
    <alternativeName>
        <fullName evidence="1">ATP synthase F1 sector subunit beta</fullName>
    </alternativeName>
    <alternativeName>
        <fullName evidence="1">F-ATPase subunit beta</fullName>
    </alternativeName>
</protein>
<evidence type="ECO:0000255" key="1">
    <source>
        <dbReference type="HAMAP-Rule" id="MF_01347"/>
    </source>
</evidence>
<evidence type="ECO:0000256" key="2">
    <source>
        <dbReference type="SAM" id="MobiDB-lite"/>
    </source>
</evidence>
<sequence length="517" mass="54666">MAKAATPKTTAAAEAKPAAAKAPAKKAPAKTAAAKSDAAPKAAKTGAVGKITQVIGAVVDVQFEDGQLPLILNALETDNLGSRLVLEVAQHLGENTVRTIAMDSTEGLVRGHEVRDTGNPIMVPVGEETLGRIMNVIGEPVDEAGPIKTTARRAIHQEAPEYIEQSTEAEILVTGIKVVDLLAPYAKGGKIGLFGGAGVGKTVLIMELINNVAKAHGGYSVFAGVGERTREGNDLYHEMIESGVNKLGGGEGSKAALVYGQMNEPPGARARVALSGLTVAENFRDKGQDVLFFVDNIFRFTQAGSELSALLGRIPSAVGYQPTLATDMGAMQERITTTTKGSITSVQAIYVPADDLTDPAPATSFAHLDATTTLNRSIAEKGIYPAVDPLESTSRMLDPMIVGEEHYAVARQVQSILQRYKSLQDIIAILGMDELSEDDKLTVARARKIERFLSQPFFVAEVFTGSPGKLVDLADTIKGFKGLCAGEYDHLPEPAFYMVGSIEEAIEKAKKLAAEAA</sequence>
<dbReference type="EC" id="7.1.2.2" evidence="1"/>
<dbReference type="EMBL" id="CP000758">
    <property type="protein sequence ID" value="ABS13825.1"/>
    <property type="molecule type" value="Genomic_DNA"/>
</dbReference>
<dbReference type="RefSeq" id="WP_012091261.1">
    <property type="nucleotide sequence ID" value="NC_009667.1"/>
</dbReference>
<dbReference type="SMR" id="A6WXX1"/>
<dbReference type="STRING" id="439375.Oant_1105"/>
<dbReference type="KEGG" id="oan:Oant_1105"/>
<dbReference type="PATRIC" id="fig|439375.7.peg.1155"/>
<dbReference type="eggNOG" id="COG0055">
    <property type="taxonomic scope" value="Bacteria"/>
</dbReference>
<dbReference type="HOGENOM" id="CLU_022398_0_2_5"/>
<dbReference type="PhylomeDB" id="A6WXX1"/>
<dbReference type="Proteomes" id="UP000002301">
    <property type="component" value="Chromosome 1"/>
</dbReference>
<dbReference type="GO" id="GO:0005886">
    <property type="term" value="C:plasma membrane"/>
    <property type="evidence" value="ECO:0007669"/>
    <property type="project" value="UniProtKB-SubCell"/>
</dbReference>
<dbReference type="GO" id="GO:0045259">
    <property type="term" value="C:proton-transporting ATP synthase complex"/>
    <property type="evidence" value="ECO:0007669"/>
    <property type="project" value="UniProtKB-KW"/>
</dbReference>
<dbReference type="GO" id="GO:0005524">
    <property type="term" value="F:ATP binding"/>
    <property type="evidence" value="ECO:0007669"/>
    <property type="project" value="UniProtKB-UniRule"/>
</dbReference>
<dbReference type="GO" id="GO:0016887">
    <property type="term" value="F:ATP hydrolysis activity"/>
    <property type="evidence" value="ECO:0007669"/>
    <property type="project" value="InterPro"/>
</dbReference>
<dbReference type="GO" id="GO:0046933">
    <property type="term" value="F:proton-transporting ATP synthase activity, rotational mechanism"/>
    <property type="evidence" value="ECO:0007669"/>
    <property type="project" value="UniProtKB-UniRule"/>
</dbReference>
<dbReference type="CDD" id="cd18110">
    <property type="entry name" value="ATP-synt_F1_beta_C"/>
    <property type="match status" value="1"/>
</dbReference>
<dbReference type="CDD" id="cd18115">
    <property type="entry name" value="ATP-synt_F1_beta_N"/>
    <property type="match status" value="1"/>
</dbReference>
<dbReference type="CDD" id="cd01133">
    <property type="entry name" value="F1-ATPase_beta_CD"/>
    <property type="match status" value="1"/>
</dbReference>
<dbReference type="FunFam" id="1.10.1140.10:FF:000001">
    <property type="entry name" value="ATP synthase subunit beta"/>
    <property type="match status" value="1"/>
</dbReference>
<dbReference type="FunFam" id="2.40.10.170:FF:000005">
    <property type="entry name" value="ATP synthase subunit beta"/>
    <property type="match status" value="1"/>
</dbReference>
<dbReference type="FunFam" id="3.40.50.300:FF:000026">
    <property type="entry name" value="ATP synthase subunit beta"/>
    <property type="match status" value="1"/>
</dbReference>
<dbReference type="Gene3D" id="2.40.10.170">
    <property type="match status" value="1"/>
</dbReference>
<dbReference type="Gene3D" id="1.10.1140.10">
    <property type="entry name" value="Bovine Mitochondrial F1-atpase, Atp Synthase Beta Chain, Chain D, domain 3"/>
    <property type="match status" value="1"/>
</dbReference>
<dbReference type="Gene3D" id="3.40.50.300">
    <property type="entry name" value="P-loop containing nucleotide triphosphate hydrolases"/>
    <property type="match status" value="1"/>
</dbReference>
<dbReference type="HAMAP" id="MF_01347">
    <property type="entry name" value="ATP_synth_beta_bact"/>
    <property type="match status" value="1"/>
</dbReference>
<dbReference type="InterPro" id="IPR003593">
    <property type="entry name" value="AAA+_ATPase"/>
</dbReference>
<dbReference type="InterPro" id="IPR055190">
    <property type="entry name" value="ATP-synt_VA_C"/>
</dbReference>
<dbReference type="InterPro" id="IPR005722">
    <property type="entry name" value="ATP_synth_F1_bsu"/>
</dbReference>
<dbReference type="InterPro" id="IPR020003">
    <property type="entry name" value="ATPase_a/bsu_AS"/>
</dbReference>
<dbReference type="InterPro" id="IPR050053">
    <property type="entry name" value="ATPase_alpha/beta_chains"/>
</dbReference>
<dbReference type="InterPro" id="IPR004100">
    <property type="entry name" value="ATPase_F1/V1/A1_a/bsu_N"/>
</dbReference>
<dbReference type="InterPro" id="IPR036121">
    <property type="entry name" value="ATPase_F1/V1/A1_a/bsu_N_sf"/>
</dbReference>
<dbReference type="InterPro" id="IPR000194">
    <property type="entry name" value="ATPase_F1/V1/A1_a/bsu_nucl-bd"/>
</dbReference>
<dbReference type="InterPro" id="IPR024034">
    <property type="entry name" value="ATPase_F1/V1_b/a_C"/>
</dbReference>
<dbReference type="InterPro" id="IPR027417">
    <property type="entry name" value="P-loop_NTPase"/>
</dbReference>
<dbReference type="NCBIfam" id="TIGR01039">
    <property type="entry name" value="atpD"/>
    <property type="match status" value="1"/>
</dbReference>
<dbReference type="PANTHER" id="PTHR15184">
    <property type="entry name" value="ATP SYNTHASE"/>
    <property type="match status" value="1"/>
</dbReference>
<dbReference type="PANTHER" id="PTHR15184:SF71">
    <property type="entry name" value="ATP SYNTHASE SUBUNIT BETA, MITOCHONDRIAL"/>
    <property type="match status" value="1"/>
</dbReference>
<dbReference type="Pfam" id="PF00006">
    <property type="entry name" value="ATP-synt_ab"/>
    <property type="match status" value="1"/>
</dbReference>
<dbReference type="Pfam" id="PF02874">
    <property type="entry name" value="ATP-synt_ab_N"/>
    <property type="match status" value="1"/>
</dbReference>
<dbReference type="Pfam" id="PF22919">
    <property type="entry name" value="ATP-synt_VA_C"/>
    <property type="match status" value="1"/>
</dbReference>
<dbReference type="PIRSF" id="PIRSF039072">
    <property type="entry name" value="ATPase_subunit_beta"/>
    <property type="match status" value="1"/>
</dbReference>
<dbReference type="SMART" id="SM00382">
    <property type="entry name" value="AAA"/>
    <property type="match status" value="1"/>
</dbReference>
<dbReference type="SUPFAM" id="SSF47917">
    <property type="entry name" value="C-terminal domain of alpha and beta subunits of F1 ATP synthase"/>
    <property type="match status" value="1"/>
</dbReference>
<dbReference type="SUPFAM" id="SSF50615">
    <property type="entry name" value="N-terminal domain of alpha and beta subunits of F1 ATP synthase"/>
    <property type="match status" value="1"/>
</dbReference>
<dbReference type="SUPFAM" id="SSF52540">
    <property type="entry name" value="P-loop containing nucleoside triphosphate hydrolases"/>
    <property type="match status" value="1"/>
</dbReference>
<dbReference type="PROSITE" id="PS00152">
    <property type="entry name" value="ATPASE_ALPHA_BETA"/>
    <property type="match status" value="1"/>
</dbReference>
<proteinExistence type="inferred from homology"/>
<reference key="1">
    <citation type="journal article" date="2011" name="J. Bacteriol.">
        <title>Genome of Ochrobactrum anthropi ATCC 49188 T, a versatile opportunistic pathogen and symbiont of several eukaryotic hosts.</title>
        <authorList>
            <person name="Chain P.S."/>
            <person name="Lang D.M."/>
            <person name="Comerci D.J."/>
            <person name="Malfatti S.A."/>
            <person name="Vergez L.M."/>
            <person name="Shin M."/>
            <person name="Ugalde R.A."/>
            <person name="Garcia E."/>
            <person name="Tolmasky M.E."/>
        </authorList>
    </citation>
    <scope>NUCLEOTIDE SEQUENCE [LARGE SCALE GENOMIC DNA]</scope>
    <source>
        <strain>ATCC 49188 / DSM 6882 / CCUG 24695 / JCM 21032 / LMG 3331 / NBRC 15819 / NCTC 12168 / Alc 37</strain>
    </source>
</reference>
<feature type="chain" id="PRO_0000339558" description="ATP synthase subunit beta">
    <location>
        <begin position="1"/>
        <end position="517"/>
    </location>
</feature>
<feature type="region of interest" description="Disordered" evidence="2">
    <location>
        <begin position="1"/>
        <end position="42"/>
    </location>
</feature>
<feature type="compositionally biased region" description="Low complexity" evidence="2">
    <location>
        <begin position="1"/>
        <end position="22"/>
    </location>
</feature>
<feature type="compositionally biased region" description="Low complexity" evidence="2">
    <location>
        <begin position="29"/>
        <end position="42"/>
    </location>
</feature>
<feature type="binding site" evidence="1">
    <location>
        <begin position="195"/>
        <end position="202"/>
    </location>
    <ligand>
        <name>ATP</name>
        <dbReference type="ChEBI" id="CHEBI:30616"/>
    </ligand>
</feature>
<accession>A6WXX1</accession>
<name>ATPB_BRUA4</name>
<organism>
    <name type="scientific">Brucella anthropi (strain ATCC 49188 / DSM 6882 / CCUG 24695 / JCM 21032 / LMG 3331 / NBRC 15819 / NCTC 12168 / Alc 37)</name>
    <name type="common">Ochrobactrum anthropi</name>
    <dbReference type="NCBI Taxonomy" id="439375"/>
    <lineage>
        <taxon>Bacteria</taxon>
        <taxon>Pseudomonadati</taxon>
        <taxon>Pseudomonadota</taxon>
        <taxon>Alphaproteobacteria</taxon>
        <taxon>Hyphomicrobiales</taxon>
        <taxon>Brucellaceae</taxon>
        <taxon>Brucella/Ochrobactrum group</taxon>
        <taxon>Brucella</taxon>
    </lineage>
</organism>